<sequence>MGGREATMVLMDENGKRCDGRTVDEPRRIMIKAGGLKNADGSSYIEFGDNKILVGVFGPRDVHPKHMSDTDTGILRVRYHMEPFSVGERKNPAPSRREIEISKVIKEALEPAVMLEKFPRTAVDVFIEVLQADGGTRCAALTAASVALADAGIPMRDMVAAIAAGKVADTVILDVNNEEDQAGQADMPIGYMPNLEKITLLQLDGVLTPEEYKKCIQVGVDGCKLVYELQKKALNDKYFGNKGD</sequence>
<proteinExistence type="inferred from homology"/>
<feature type="chain" id="PRO_1000212171" description="Exosome complex component Rrp41">
    <location>
        <begin position="1"/>
        <end position="244"/>
    </location>
</feature>
<comment type="function">
    <text evidence="1">Catalytic component of the exosome, which is a complex involved in RNA degradation. Has 3'-&gt;5' exoribonuclease activity. Can also synthesize heteromeric RNA-tails.</text>
</comment>
<comment type="subunit">
    <text evidence="1">Component of the archaeal exosome complex. Forms a hexameric ring-like arrangement composed of 3 Rrp41-Rrp42 heterodimers. The hexameric ring associates with a trimer of Rrp4 and/or Csl4 subunits.</text>
</comment>
<comment type="subcellular location">
    <subcellularLocation>
        <location evidence="1">Cytoplasm</location>
    </subcellularLocation>
</comment>
<comment type="similarity">
    <text evidence="1">Belongs to the RNase PH family. Rrp41 subfamily.</text>
</comment>
<reference key="1">
    <citation type="journal article" date="2010" name="Proc. Natl. Acad. Sci. U.S.A.">
        <title>Nitrosopumilus maritimus genome reveals unique mechanisms for nitrification and autotrophy in globally distributed marine crenarchaea.</title>
        <authorList>
            <person name="Walker C.B."/>
            <person name="de la Torre J.R."/>
            <person name="Klotz M.G."/>
            <person name="Urakawa H."/>
            <person name="Pinel N."/>
            <person name="Arp D.J."/>
            <person name="Brochier-Armanet C."/>
            <person name="Chain P.S."/>
            <person name="Chan P.P."/>
            <person name="Gollabgir A."/>
            <person name="Hemp J."/>
            <person name="Hugler M."/>
            <person name="Karr E.A."/>
            <person name="Konneke M."/>
            <person name="Shin M."/>
            <person name="Lawton T.J."/>
            <person name="Lowe T."/>
            <person name="Martens-Habbena W."/>
            <person name="Sayavedra-Soto L.A."/>
            <person name="Lang D."/>
            <person name="Sievert S.M."/>
            <person name="Rosenzweig A.C."/>
            <person name="Manning G."/>
            <person name="Stahl D.A."/>
        </authorList>
    </citation>
    <scope>NUCLEOTIDE SEQUENCE [LARGE SCALE GENOMIC DNA]</scope>
    <source>
        <strain>SCM1</strain>
    </source>
</reference>
<evidence type="ECO:0000255" key="1">
    <source>
        <dbReference type="HAMAP-Rule" id="MF_00591"/>
    </source>
</evidence>
<organism>
    <name type="scientific">Nitrosopumilus maritimus (strain SCM1)</name>
    <dbReference type="NCBI Taxonomy" id="436308"/>
    <lineage>
        <taxon>Archaea</taxon>
        <taxon>Nitrososphaerota</taxon>
        <taxon>Nitrososphaeria</taxon>
        <taxon>Nitrosopumilales</taxon>
        <taxon>Nitrosopumilaceae</taxon>
        <taxon>Nitrosopumilus</taxon>
    </lineage>
</organism>
<name>RRP41_NITMS</name>
<dbReference type="EC" id="3.1.13.-" evidence="1"/>
<dbReference type="EMBL" id="CP000866">
    <property type="protein sequence ID" value="ABX12328.1"/>
    <property type="molecule type" value="Genomic_DNA"/>
</dbReference>
<dbReference type="RefSeq" id="WP_012214815.1">
    <property type="nucleotide sequence ID" value="NC_010085.1"/>
</dbReference>
<dbReference type="SMR" id="A9A5C9"/>
<dbReference type="FunCoup" id="A9A5C9">
    <property type="interactions" value="164"/>
</dbReference>
<dbReference type="STRING" id="436308.Nmar_0432"/>
<dbReference type="EnsemblBacteria" id="ABX12328">
    <property type="protein sequence ID" value="ABX12328"/>
    <property type="gene ID" value="Nmar_0432"/>
</dbReference>
<dbReference type="GeneID" id="5773235"/>
<dbReference type="KEGG" id="nmr:Nmar_0432"/>
<dbReference type="eggNOG" id="arCOG01575">
    <property type="taxonomic scope" value="Archaea"/>
</dbReference>
<dbReference type="HOGENOM" id="CLU_063514_0_0_2"/>
<dbReference type="InParanoid" id="A9A5C9"/>
<dbReference type="OrthoDB" id="24266at2157"/>
<dbReference type="PhylomeDB" id="A9A5C9"/>
<dbReference type="Proteomes" id="UP000000792">
    <property type="component" value="Chromosome"/>
</dbReference>
<dbReference type="GO" id="GO:0000177">
    <property type="term" value="C:cytoplasmic exosome (RNase complex)"/>
    <property type="evidence" value="ECO:0000318"/>
    <property type="project" value="GO_Central"/>
</dbReference>
<dbReference type="GO" id="GO:0000175">
    <property type="term" value="F:3'-5'-RNA exonuclease activity"/>
    <property type="evidence" value="ECO:0007669"/>
    <property type="project" value="UniProtKB-UniRule"/>
</dbReference>
<dbReference type="GO" id="GO:0003723">
    <property type="term" value="F:RNA binding"/>
    <property type="evidence" value="ECO:0000318"/>
    <property type="project" value="GO_Central"/>
</dbReference>
<dbReference type="GO" id="GO:0010467">
    <property type="term" value="P:gene expression"/>
    <property type="evidence" value="ECO:0007669"/>
    <property type="project" value="UniProtKB-ARBA"/>
</dbReference>
<dbReference type="GO" id="GO:0016075">
    <property type="term" value="P:rRNA catabolic process"/>
    <property type="evidence" value="ECO:0000318"/>
    <property type="project" value="GO_Central"/>
</dbReference>
<dbReference type="CDD" id="cd11366">
    <property type="entry name" value="RNase_PH_archRRP41"/>
    <property type="match status" value="1"/>
</dbReference>
<dbReference type="FunFam" id="3.30.230.70:FF:000004">
    <property type="entry name" value="Exosome complex component Rrp41"/>
    <property type="match status" value="1"/>
</dbReference>
<dbReference type="Gene3D" id="3.30.230.70">
    <property type="entry name" value="GHMP Kinase, N-terminal domain"/>
    <property type="match status" value="1"/>
</dbReference>
<dbReference type="HAMAP" id="MF_00591">
    <property type="entry name" value="Exosome_Rrp41"/>
    <property type="match status" value="1"/>
</dbReference>
<dbReference type="InterPro" id="IPR001247">
    <property type="entry name" value="ExoRNase_PH_dom1"/>
</dbReference>
<dbReference type="InterPro" id="IPR015847">
    <property type="entry name" value="ExoRNase_PH_dom2"/>
</dbReference>
<dbReference type="InterPro" id="IPR036345">
    <property type="entry name" value="ExoRNase_PH_dom2_sf"/>
</dbReference>
<dbReference type="InterPro" id="IPR027408">
    <property type="entry name" value="PNPase/RNase_PH_dom_sf"/>
</dbReference>
<dbReference type="InterPro" id="IPR020568">
    <property type="entry name" value="Ribosomal_Su5_D2-typ_SF"/>
</dbReference>
<dbReference type="InterPro" id="IPR050080">
    <property type="entry name" value="RNase_PH"/>
</dbReference>
<dbReference type="InterPro" id="IPR011807">
    <property type="entry name" value="Rrp41"/>
</dbReference>
<dbReference type="NCBIfam" id="TIGR02065">
    <property type="entry name" value="ECX1"/>
    <property type="match status" value="1"/>
</dbReference>
<dbReference type="PANTHER" id="PTHR11953">
    <property type="entry name" value="EXOSOME COMPLEX COMPONENT"/>
    <property type="match status" value="1"/>
</dbReference>
<dbReference type="PANTHER" id="PTHR11953:SF0">
    <property type="entry name" value="EXOSOME COMPLEX COMPONENT RRP41"/>
    <property type="match status" value="1"/>
</dbReference>
<dbReference type="Pfam" id="PF01138">
    <property type="entry name" value="RNase_PH"/>
    <property type="match status" value="1"/>
</dbReference>
<dbReference type="Pfam" id="PF03725">
    <property type="entry name" value="RNase_PH_C"/>
    <property type="match status" value="1"/>
</dbReference>
<dbReference type="SUPFAM" id="SSF55666">
    <property type="entry name" value="Ribonuclease PH domain 2-like"/>
    <property type="match status" value="1"/>
</dbReference>
<dbReference type="SUPFAM" id="SSF54211">
    <property type="entry name" value="Ribosomal protein S5 domain 2-like"/>
    <property type="match status" value="1"/>
</dbReference>
<gene>
    <name evidence="1" type="primary">rrp41</name>
    <name type="ordered locus">Nmar_0432</name>
</gene>
<protein>
    <recommendedName>
        <fullName evidence="1">Exosome complex component Rrp41</fullName>
        <ecNumber evidence="1">3.1.13.-</ecNumber>
    </recommendedName>
</protein>
<keyword id="KW-0963">Cytoplasm</keyword>
<keyword id="KW-0269">Exonuclease</keyword>
<keyword id="KW-0271">Exosome</keyword>
<keyword id="KW-0378">Hydrolase</keyword>
<keyword id="KW-0540">Nuclease</keyword>
<keyword id="KW-1185">Reference proteome</keyword>
<accession>A9A5C9</accession>